<accession>A2QTF1</accession>
<evidence type="ECO:0000250" key="1">
    <source>
        <dbReference type="UniProtKB" id="Q9Y7D0"/>
    </source>
</evidence>
<evidence type="ECO:0000255" key="2"/>
<evidence type="ECO:0000269" key="3">
    <source>
    </source>
</evidence>
<evidence type="ECO:0000303" key="4">
    <source>
    </source>
</evidence>
<evidence type="ECO:0000305" key="5"/>
<evidence type="ECO:0000305" key="6">
    <source>
    </source>
</evidence>
<dbReference type="EC" id="1.-.-.-" evidence="6"/>
<dbReference type="EMBL" id="AM270194">
    <property type="protein sequence ID" value="CAK40126.1"/>
    <property type="molecule type" value="Genomic_DNA"/>
</dbReference>
<dbReference type="RefSeq" id="XP_001393503.1">
    <property type="nucleotide sequence ID" value="XM_001393466.1"/>
</dbReference>
<dbReference type="SMR" id="A2QTF1"/>
<dbReference type="EnsemblFungi" id="CAK40126">
    <property type="protein sequence ID" value="CAK40126"/>
    <property type="gene ID" value="An09g01880"/>
</dbReference>
<dbReference type="GeneID" id="4983719"/>
<dbReference type="KEGG" id="ang:An09g01880"/>
<dbReference type="VEuPathDB" id="FungiDB:An09g01880"/>
<dbReference type="HOGENOM" id="CLU_026673_16_5_1"/>
<dbReference type="Proteomes" id="UP000006706">
    <property type="component" value="Chromosome 1L"/>
</dbReference>
<dbReference type="GO" id="GO:0000166">
    <property type="term" value="F:nucleotide binding"/>
    <property type="evidence" value="ECO:0007669"/>
    <property type="project" value="UniProtKB-KW"/>
</dbReference>
<dbReference type="GO" id="GO:0016651">
    <property type="term" value="F:oxidoreductase activity, acting on NAD(P)H"/>
    <property type="evidence" value="ECO:0007669"/>
    <property type="project" value="InterPro"/>
</dbReference>
<dbReference type="CDD" id="cd08249">
    <property type="entry name" value="enoyl_reductase_like"/>
    <property type="match status" value="1"/>
</dbReference>
<dbReference type="Gene3D" id="3.90.180.10">
    <property type="entry name" value="Medium-chain alcohol dehydrogenases, catalytic domain"/>
    <property type="match status" value="1"/>
</dbReference>
<dbReference type="Gene3D" id="3.40.50.720">
    <property type="entry name" value="NAD(P)-binding Rossmann-like Domain"/>
    <property type="match status" value="1"/>
</dbReference>
<dbReference type="InterPro" id="IPR013149">
    <property type="entry name" value="ADH-like_C"/>
</dbReference>
<dbReference type="InterPro" id="IPR013154">
    <property type="entry name" value="ADH-like_N"/>
</dbReference>
<dbReference type="InterPro" id="IPR011032">
    <property type="entry name" value="GroES-like_sf"/>
</dbReference>
<dbReference type="InterPro" id="IPR036291">
    <property type="entry name" value="NAD(P)-bd_dom_sf"/>
</dbReference>
<dbReference type="InterPro" id="IPR020843">
    <property type="entry name" value="PKS_ER"/>
</dbReference>
<dbReference type="InterPro" id="IPR047122">
    <property type="entry name" value="Trans-enoyl_RdTase-like"/>
</dbReference>
<dbReference type="PANTHER" id="PTHR45348">
    <property type="entry name" value="HYPOTHETICAL OXIDOREDUCTASE (EUROFUNG)"/>
    <property type="match status" value="1"/>
</dbReference>
<dbReference type="PANTHER" id="PTHR45348:SF2">
    <property type="entry name" value="ZINC-TYPE ALCOHOL DEHYDROGENASE-LIKE PROTEIN C2E1P3.01"/>
    <property type="match status" value="1"/>
</dbReference>
<dbReference type="Pfam" id="PF08240">
    <property type="entry name" value="ADH_N"/>
    <property type="match status" value="1"/>
</dbReference>
<dbReference type="Pfam" id="PF00107">
    <property type="entry name" value="ADH_zinc_N"/>
    <property type="match status" value="1"/>
</dbReference>
<dbReference type="SMART" id="SM00829">
    <property type="entry name" value="PKS_ER"/>
    <property type="match status" value="1"/>
</dbReference>
<dbReference type="SUPFAM" id="SSF50129">
    <property type="entry name" value="GroES-like"/>
    <property type="match status" value="1"/>
</dbReference>
<dbReference type="SUPFAM" id="SSF51735">
    <property type="entry name" value="NAD(P)-binding Rossmann-fold domains"/>
    <property type="match status" value="1"/>
</dbReference>
<name>EPAF_ASPNC</name>
<comment type="function">
    <text evidence="3 6">Dehydrogenase; part of the gene cluster that mediates the biosynthesis of nigerpyrone and its derivatives carbonarone A and pestalamide A (PubMed:30384904). The biosynthesis pathway begins with the polyketide assembly by epaA to form phenylacetyl triketide precursor from successive condensation of two malonyl-CoA, presumably with one phenylacetyl-CoA starter unit produced by the phenylacetyl-CoA ligase epaB (PubMed:30384904). For the nigerpyrone biosynthesis, the reactive polyketide chain is released as an aldehyde through the R-domain. A nonenzymatic cyclization and dehydration may create nigerpyrone (PubMed:30384904). For the biosynthesis of carbonarone A and pestalamide A, an extra methyl group is added through the C-methyltransferase domain. Several further steps involving the dehydrogenase orf1, the cytochrome P450 monooxygenase orf2 and the FAD-dependent monooxygenase orf3 are required to form a carbonarone A precursor which is converted to carbonarone A via cyclization (PubMed:30384904). The O-acetyltransferase epaC could catalyze the transfer of 2-methylsuccinyl-CoA, a common intermediate in the ethylmalonyl-CoA pathway, to generate the final product pestalamide A (Probable).</text>
</comment>
<comment type="pathway">
    <text evidence="6">Secondary metabolite biosynthesis.</text>
</comment>
<comment type="similarity">
    <text evidence="5">Belongs to the zinc-containing alcohol dehydrogenase family.</text>
</comment>
<feature type="chain" id="PRO_0000446159" description="Dehydrogenase orf1">
    <location>
        <begin position="1"/>
        <end position="346"/>
    </location>
</feature>
<feature type="binding site" evidence="1">
    <location>
        <begin position="43"/>
        <end position="48"/>
    </location>
    <ligand>
        <name>NADP(+)</name>
        <dbReference type="ChEBI" id="CHEBI:58349"/>
    </ligand>
</feature>
<feature type="binding site" evidence="2">
    <location>
        <begin position="133"/>
        <end position="140"/>
    </location>
    <ligand>
        <name>substrate</name>
    </ligand>
</feature>
<feature type="binding site" evidence="1">
    <location>
        <begin position="170"/>
        <end position="173"/>
    </location>
    <ligand>
        <name>NADP(+)</name>
        <dbReference type="ChEBI" id="CHEBI:58349"/>
    </ligand>
</feature>
<feature type="binding site" evidence="1">
    <location>
        <begin position="193"/>
        <end position="196"/>
    </location>
    <ligand>
        <name>NADP(+)</name>
        <dbReference type="ChEBI" id="CHEBI:58349"/>
    </ligand>
</feature>
<feature type="binding site" evidence="1">
    <location>
        <position position="211"/>
    </location>
    <ligand>
        <name>NADP(+)</name>
        <dbReference type="ChEBI" id="CHEBI:58349"/>
    </ligand>
</feature>
<feature type="binding site" evidence="1">
    <location>
        <begin position="251"/>
        <end position="252"/>
    </location>
    <ligand>
        <name>NADP(+)</name>
        <dbReference type="ChEBI" id="CHEBI:58349"/>
    </ligand>
</feature>
<feature type="binding site" evidence="2">
    <location>
        <begin position="269"/>
        <end position="273"/>
    </location>
    <ligand>
        <name>substrate</name>
    </ligand>
</feature>
<feature type="binding site" evidence="1">
    <location>
        <begin position="336"/>
        <end position="337"/>
    </location>
    <ligand>
        <name>NADP(+)</name>
        <dbReference type="ChEBI" id="CHEBI:58349"/>
    </ligand>
</feature>
<gene>
    <name evidence="4" type="primary">orf1</name>
    <name type="ORF">An09g01880</name>
</gene>
<sequence>MPTNFAAIVPGKNQSLVVQEAPYPTAGENRIVVRVHALAVNAVDYATQMMGETLFPWVTYPLVLGEDIAGEVVAIGPGVTRFKPGDRVVGHAVGTNSNNSAEGAFQQYVVLLENMASPLPHALEYQQAAVVPLAFSTAIVGLFQKDYLGLQIPSLTPTRTGKTLLIWGGATSVGCNAIQLAVAAGYEVITTCSPHNFDLVKSLGATAAFDYKKPSIRDDLREAFRGKTCAGALAIAGVVPQTRNEAAEACLNLVAESEGDKFVALSMPAPPNVPDGVSCKFIFASTVKDNEVSHQLYGYLGEALAHGSFIAAPEAEVVGTGLEAVQGALNALKQGVSAKKLVVTLP</sequence>
<organism>
    <name type="scientific">Aspergillus niger (strain ATCC MYA-4892 / CBS 513.88 / FGSC A1513)</name>
    <dbReference type="NCBI Taxonomy" id="425011"/>
    <lineage>
        <taxon>Eukaryota</taxon>
        <taxon>Fungi</taxon>
        <taxon>Dikarya</taxon>
        <taxon>Ascomycota</taxon>
        <taxon>Pezizomycotina</taxon>
        <taxon>Eurotiomycetes</taxon>
        <taxon>Eurotiomycetidae</taxon>
        <taxon>Eurotiales</taxon>
        <taxon>Aspergillaceae</taxon>
        <taxon>Aspergillus</taxon>
        <taxon>Aspergillus subgen. Circumdati</taxon>
    </lineage>
</organism>
<reference key="1">
    <citation type="journal article" date="2007" name="Nat. Biotechnol.">
        <title>Genome sequencing and analysis of the versatile cell factory Aspergillus niger CBS 513.88.</title>
        <authorList>
            <person name="Pel H.J."/>
            <person name="de Winde J.H."/>
            <person name="Archer D.B."/>
            <person name="Dyer P.S."/>
            <person name="Hofmann G."/>
            <person name="Schaap P.J."/>
            <person name="Turner G."/>
            <person name="de Vries R.P."/>
            <person name="Albang R."/>
            <person name="Albermann K."/>
            <person name="Andersen M.R."/>
            <person name="Bendtsen J.D."/>
            <person name="Benen J.A.E."/>
            <person name="van den Berg M."/>
            <person name="Breestraat S."/>
            <person name="Caddick M.X."/>
            <person name="Contreras R."/>
            <person name="Cornell M."/>
            <person name="Coutinho P.M."/>
            <person name="Danchin E.G.J."/>
            <person name="Debets A.J.M."/>
            <person name="Dekker P."/>
            <person name="van Dijck P.W.M."/>
            <person name="van Dijk A."/>
            <person name="Dijkhuizen L."/>
            <person name="Driessen A.J.M."/>
            <person name="d'Enfert C."/>
            <person name="Geysens S."/>
            <person name="Goosen C."/>
            <person name="Groot G.S.P."/>
            <person name="de Groot P.W.J."/>
            <person name="Guillemette T."/>
            <person name="Henrissat B."/>
            <person name="Herweijer M."/>
            <person name="van den Hombergh J.P.T.W."/>
            <person name="van den Hondel C.A.M.J.J."/>
            <person name="van der Heijden R.T.J.M."/>
            <person name="van der Kaaij R.M."/>
            <person name="Klis F.M."/>
            <person name="Kools H.J."/>
            <person name="Kubicek C.P."/>
            <person name="van Kuyk P.A."/>
            <person name="Lauber J."/>
            <person name="Lu X."/>
            <person name="van der Maarel M.J.E.C."/>
            <person name="Meulenberg R."/>
            <person name="Menke H."/>
            <person name="Mortimer M.A."/>
            <person name="Nielsen J."/>
            <person name="Oliver S.G."/>
            <person name="Olsthoorn M."/>
            <person name="Pal K."/>
            <person name="van Peij N.N.M.E."/>
            <person name="Ram A.F.J."/>
            <person name="Rinas U."/>
            <person name="Roubos J.A."/>
            <person name="Sagt C.M.J."/>
            <person name="Schmoll M."/>
            <person name="Sun J."/>
            <person name="Ussery D."/>
            <person name="Varga J."/>
            <person name="Vervecken W."/>
            <person name="van de Vondervoort P.J.J."/>
            <person name="Wedler H."/>
            <person name="Woesten H.A.B."/>
            <person name="Zeng A.-P."/>
            <person name="van Ooyen A.J.J."/>
            <person name="Visser J."/>
            <person name="Stam H."/>
        </authorList>
    </citation>
    <scope>NUCLEOTIDE SEQUENCE [LARGE SCALE GENOMIC DNA]</scope>
    <source>
        <strain>ATCC MYA-4892 / CBS 513.88 / FGSC A1513</strain>
    </source>
</reference>
<reference key="2">
    <citation type="journal article" date="2018" name="Microbiol. Res.">
        <title>Deletion of the epigenetic regulator GcnE in Aspergillus niger FGSC A1279 activates the production of multiple polyketide metabolites.</title>
        <authorList>
            <person name="Wang B."/>
            <person name="Li X."/>
            <person name="Yu D."/>
            <person name="Chen X."/>
            <person name="Tabudravu J."/>
            <person name="Deng H."/>
            <person name="Pan L."/>
        </authorList>
    </citation>
    <scope>IDENTIFICATION</scope>
    <scope>FUNCTION</scope>
    <scope>PATHWAY</scope>
</reference>
<proteinExistence type="inferred from homology"/>
<keyword id="KW-0521">NADP</keyword>
<keyword id="KW-0547">Nucleotide-binding</keyword>
<keyword id="KW-0560">Oxidoreductase</keyword>
<keyword id="KW-1185">Reference proteome</keyword>
<protein>
    <recommendedName>
        <fullName evidence="4">Dehydrogenase orf1</fullName>
        <ecNumber evidence="6">1.-.-.-</ecNumber>
    </recommendedName>
    <alternativeName>
        <fullName evidence="4">Pestalamide A biosynthesis cluster protein orf1</fullName>
    </alternativeName>
</protein>